<keyword id="KW-0413">Isomerase</keyword>
<keyword id="KW-0819">tRNA processing</keyword>
<protein>
    <recommendedName>
        <fullName evidence="1">tRNA pseudouridine synthase B</fullName>
        <ecNumber evidence="1">5.4.99.25</ecNumber>
    </recommendedName>
    <alternativeName>
        <fullName evidence="1">tRNA pseudouridine(55) synthase</fullName>
        <shortName evidence="1">Psi55 synthase</shortName>
    </alternativeName>
    <alternativeName>
        <fullName evidence="1">tRNA pseudouridylate synthase</fullName>
    </alternativeName>
    <alternativeName>
        <fullName evidence="1">tRNA-uridine isomerase</fullName>
    </alternativeName>
</protein>
<proteinExistence type="inferred from homology"/>
<sequence length="270" mass="30257">MVRQRKKRGRPVSGWVIFDKPKGMRSTEAVSQIKWLFHAQKAGHAGTLDPLASGLLPIALGEATKTVPYVMQGTKTYRFQIAWGEERSTDDLEGEITHISSKRPTQEEILALLPQYTGVILQTPPQFSAIKITGNRAYDLAREGKVVEIPPRQVEIETFKLIETPTRERSVFEITCGKGTYVRSLARDMGRDLGCYGHIADLRRTTVAPFCEDDLITWEELKAVALDKIAINENGIPSERNFTKIDELLIETGAALKCLSHYTLSETRAQ</sequence>
<organism>
    <name type="scientific">Bartonella quintana (strain Toulouse)</name>
    <name type="common">Rochalimaea quintana</name>
    <dbReference type="NCBI Taxonomy" id="283165"/>
    <lineage>
        <taxon>Bacteria</taxon>
        <taxon>Pseudomonadati</taxon>
        <taxon>Pseudomonadota</taxon>
        <taxon>Alphaproteobacteria</taxon>
        <taxon>Hyphomicrobiales</taxon>
        <taxon>Bartonellaceae</taxon>
        <taxon>Bartonella</taxon>
    </lineage>
</organism>
<gene>
    <name evidence="1" type="primary">truB</name>
    <name type="ordered locus">BQ02010</name>
</gene>
<name>TRUB_BARQU</name>
<evidence type="ECO:0000255" key="1">
    <source>
        <dbReference type="HAMAP-Rule" id="MF_01080"/>
    </source>
</evidence>
<dbReference type="EC" id="5.4.99.25" evidence="1"/>
<dbReference type="EMBL" id="BX897700">
    <property type="protein sequence ID" value="CAF25704.1"/>
    <property type="molecule type" value="Genomic_DNA"/>
</dbReference>
<dbReference type="SMR" id="Q6G0P4"/>
<dbReference type="KEGG" id="bqu:BQ02010"/>
<dbReference type="eggNOG" id="COG0130">
    <property type="taxonomic scope" value="Bacteria"/>
</dbReference>
<dbReference type="HOGENOM" id="CLU_032087_2_0_5"/>
<dbReference type="OrthoDB" id="9802309at2"/>
<dbReference type="Proteomes" id="UP000000597">
    <property type="component" value="Chromosome"/>
</dbReference>
<dbReference type="GO" id="GO:0003723">
    <property type="term" value="F:RNA binding"/>
    <property type="evidence" value="ECO:0007669"/>
    <property type="project" value="InterPro"/>
</dbReference>
<dbReference type="GO" id="GO:0160148">
    <property type="term" value="F:tRNA pseudouridine(55) synthase activity"/>
    <property type="evidence" value="ECO:0007669"/>
    <property type="project" value="UniProtKB-EC"/>
</dbReference>
<dbReference type="GO" id="GO:1990481">
    <property type="term" value="P:mRNA pseudouridine synthesis"/>
    <property type="evidence" value="ECO:0007669"/>
    <property type="project" value="TreeGrafter"/>
</dbReference>
<dbReference type="GO" id="GO:0031119">
    <property type="term" value="P:tRNA pseudouridine synthesis"/>
    <property type="evidence" value="ECO:0007669"/>
    <property type="project" value="UniProtKB-UniRule"/>
</dbReference>
<dbReference type="CDD" id="cd02573">
    <property type="entry name" value="PseudoU_synth_EcTruB"/>
    <property type="match status" value="1"/>
</dbReference>
<dbReference type="Gene3D" id="3.30.2350.10">
    <property type="entry name" value="Pseudouridine synthase"/>
    <property type="match status" value="1"/>
</dbReference>
<dbReference type="HAMAP" id="MF_01080">
    <property type="entry name" value="TruB_bact"/>
    <property type="match status" value="1"/>
</dbReference>
<dbReference type="InterPro" id="IPR020103">
    <property type="entry name" value="PsdUridine_synth_cat_dom_sf"/>
</dbReference>
<dbReference type="InterPro" id="IPR002501">
    <property type="entry name" value="PsdUridine_synth_N"/>
</dbReference>
<dbReference type="InterPro" id="IPR014780">
    <property type="entry name" value="tRNA_psdUridine_synth_TruB"/>
</dbReference>
<dbReference type="InterPro" id="IPR032819">
    <property type="entry name" value="TruB_C"/>
</dbReference>
<dbReference type="NCBIfam" id="TIGR00431">
    <property type="entry name" value="TruB"/>
    <property type="match status" value="1"/>
</dbReference>
<dbReference type="PANTHER" id="PTHR13767:SF2">
    <property type="entry name" value="PSEUDOURIDYLATE SYNTHASE TRUB1"/>
    <property type="match status" value="1"/>
</dbReference>
<dbReference type="PANTHER" id="PTHR13767">
    <property type="entry name" value="TRNA-PSEUDOURIDINE SYNTHASE"/>
    <property type="match status" value="1"/>
</dbReference>
<dbReference type="Pfam" id="PF16198">
    <property type="entry name" value="TruB_C_2"/>
    <property type="match status" value="1"/>
</dbReference>
<dbReference type="Pfam" id="PF01509">
    <property type="entry name" value="TruB_N"/>
    <property type="match status" value="1"/>
</dbReference>
<dbReference type="SUPFAM" id="SSF55120">
    <property type="entry name" value="Pseudouridine synthase"/>
    <property type="match status" value="1"/>
</dbReference>
<feature type="chain" id="PRO_0000121795" description="tRNA pseudouridine synthase B">
    <location>
        <begin position="1"/>
        <end position="270"/>
    </location>
</feature>
<feature type="active site" description="Nucleophile" evidence="1">
    <location>
        <position position="49"/>
    </location>
</feature>
<comment type="function">
    <text evidence="1">Responsible for synthesis of pseudouridine from uracil-55 in the psi GC loop of transfer RNAs.</text>
</comment>
<comment type="catalytic activity">
    <reaction evidence="1">
        <text>uridine(55) in tRNA = pseudouridine(55) in tRNA</text>
        <dbReference type="Rhea" id="RHEA:42532"/>
        <dbReference type="Rhea" id="RHEA-COMP:10101"/>
        <dbReference type="Rhea" id="RHEA-COMP:10102"/>
        <dbReference type="ChEBI" id="CHEBI:65314"/>
        <dbReference type="ChEBI" id="CHEBI:65315"/>
        <dbReference type="EC" id="5.4.99.25"/>
    </reaction>
</comment>
<comment type="similarity">
    <text evidence="1">Belongs to the pseudouridine synthase TruB family. Type 1 subfamily.</text>
</comment>
<accession>Q6G0P4</accession>
<reference key="1">
    <citation type="journal article" date="2004" name="Proc. Natl. Acad. Sci. U.S.A.">
        <title>The louse-borne human pathogen Bartonella quintana is a genomic derivative of the zoonotic agent Bartonella henselae.</title>
        <authorList>
            <person name="Alsmark U.C.M."/>
            <person name="Frank A.C."/>
            <person name="Karlberg E.O."/>
            <person name="Legault B.-A."/>
            <person name="Ardell D.H."/>
            <person name="Canbaeck B."/>
            <person name="Eriksson A.-S."/>
            <person name="Naeslund A.K."/>
            <person name="Handley S.A."/>
            <person name="Huvet M."/>
            <person name="La Scola B."/>
            <person name="Holmberg M."/>
            <person name="Andersson S.G.E."/>
        </authorList>
    </citation>
    <scope>NUCLEOTIDE SEQUENCE [LARGE SCALE GENOMIC DNA]</scope>
    <source>
        <strain>Toulouse</strain>
    </source>
</reference>